<sequence>MDPIKHISLPVLVLFLLLSVSAGQPGTPDQRHDPYAYSGSLSPAMAVVVVVVIAALFFMGFFTVYIRHCTGAVDGSVTPAGGARRRVTNATVARGLDAETIETFPTFVYSEVKTQKIGKGALECAICLNEFEDDETLRLLPKCDHVFHPHCIGAWLQGHVTCPVCRTNLAEQTPEPEVVVETDLEAQQQSAVPVPVVELPRVKFPRSHTTGHSVVLPGESTDRFTLRVPEELRKKIMANWKLNRSNSVFVLPRGGSSRSGKQVDRSRAKSDRWLFRKTPSFLWRNRDDGSIRLGGTGSVRGNSVTSPSGDSVRADRWAFLRNPSFLWRNTTPVPSPRVEVNNKDGEGTSSVQHIGTVGSTSGSLRLPV</sequence>
<evidence type="ECO:0000250" key="1"/>
<evidence type="ECO:0000250" key="2">
    <source>
        <dbReference type="UniProtKB" id="Q8RXX9"/>
    </source>
</evidence>
<evidence type="ECO:0000255" key="3"/>
<evidence type="ECO:0000255" key="4">
    <source>
        <dbReference type="PROSITE-ProRule" id="PRU00175"/>
    </source>
</evidence>
<evidence type="ECO:0000256" key="5">
    <source>
        <dbReference type="SAM" id="MobiDB-lite"/>
    </source>
</evidence>
<evidence type="ECO:0000269" key="6">
    <source>
    </source>
</evidence>
<evidence type="ECO:0000269" key="7">
    <source>
    </source>
</evidence>
<evidence type="ECO:0000269" key="8">
    <source ref="8"/>
</evidence>
<evidence type="ECO:0000305" key="9"/>
<comment type="function">
    <text evidence="7 8">E3 ubiquitin-protein ligase that is required for the plant C/N response during seedling growth transition. May be involved in the early steps of the plant defense signaling pathway.</text>
</comment>
<comment type="catalytic activity">
    <reaction evidence="7">
        <text>S-ubiquitinyl-[E2 ubiquitin-conjugating enzyme]-L-cysteine + [acceptor protein]-L-lysine = [E2 ubiquitin-conjugating enzyme]-L-cysteine + N(6)-ubiquitinyl-[acceptor protein]-L-lysine.</text>
        <dbReference type="EC" id="2.3.2.27"/>
    </reaction>
</comment>
<comment type="pathway">
    <text>Protein modification; protein ubiquitination.</text>
</comment>
<comment type="subcellular location">
    <subcellularLocation>
        <location evidence="7">Membrane</location>
        <topology evidence="7">Single-pass membrane protein</topology>
    </subcellularLocation>
</comment>
<comment type="induction">
    <text evidence="6 7">Up-regulated by chitin. Down-regulated by abscisic acid (ABA).</text>
</comment>
<comment type="domain">
    <text evidence="1">The RING-type zinc finger domain mediates binding to an E2 ubiquitin-conjugating enzyme.</text>
</comment>
<comment type="disruption phenotype">
    <text evidence="7">Hypersensitivity to C/N conditions during post-germinative growth.</text>
</comment>
<comment type="similarity">
    <text evidence="9">Belongs to the RING-type zinc finger family. ATL subfamily.</text>
</comment>
<protein>
    <recommendedName>
        <fullName>E3 ubiquitin-protein ligase ATL31</fullName>
        <ecNumber evidence="7">2.3.2.27</ecNumber>
    </recommendedName>
    <alternativeName>
        <fullName>Protein CARBON/NITROGEN INSENSITIVE 1</fullName>
    </alternativeName>
    <alternativeName>
        <fullName>Protein SUPER SURVIVAL 1</fullName>
    </alternativeName>
    <alternativeName>
        <fullName>RING-H2 finger protein ATL31</fullName>
    </alternativeName>
    <alternativeName>
        <fullName evidence="9">RING-type E3 ubiquitin transferase ATL31</fullName>
    </alternativeName>
</protein>
<proteinExistence type="evidence at protein level"/>
<gene>
    <name type="primary">ATL31</name>
    <name type="synonym">CNI1</name>
    <name type="synonym">SSV1</name>
    <name type="ordered locus">At5g27420</name>
    <name type="ORF">F21A20.130</name>
</gene>
<keyword id="KW-0472">Membrane</keyword>
<keyword id="KW-0479">Metal-binding</keyword>
<keyword id="KW-0597">Phosphoprotein</keyword>
<keyword id="KW-0611">Plant defense</keyword>
<keyword id="KW-1185">Reference proteome</keyword>
<keyword id="KW-0732">Signal</keyword>
<keyword id="KW-0808">Transferase</keyword>
<keyword id="KW-0812">Transmembrane</keyword>
<keyword id="KW-1133">Transmembrane helix</keyword>
<keyword id="KW-0833">Ubl conjugation pathway</keyword>
<keyword id="KW-0862">Zinc</keyword>
<keyword id="KW-0863">Zinc-finger</keyword>
<feature type="signal peptide" evidence="3">
    <location>
        <begin position="1"/>
        <end position="23"/>
    </location>
</feature>
<feature type="chain" id="PRO_0000030716" description="E3 ubiquitin-protein ligase ATL31">
    <location>
        <begin position="24"/>
        <end position="368"/>
    </location>
</feature>
<feature type="transmembrane region" description="Helical" evidence="3">
    <location>
        <begin position="46"/>
        <end position="66"/>
    </location>
</feature>
<feature type="zinc finger region" description="RING-type; atypical" evidence="4">
    <location>
        <begin position="124"/>
        <end position="166"/>
    </location>
</feature>
<feature type="region of interest" description="Disordered" evidence="5">
    <location>
        <begin position="342"/>
        <end position="368"/>
    </location>
</feature>
<feature type="compositionally biased region" description="Polar residues" evidence="5">
    <location>
        <begin position="347"/>
        <end position="368"/>
    </location>
</feature>
<feature type="modified residue" description="Phosphoserine" evidence="2">
    <location>
        <position position="247"/>
    </location>
</feature>
<feature type="sequence conflict" description="In Ref. 4; AAM60957." evidence="9" ref="4">
    <original>A</original>
    <variation>V</variation>
    <location>
        <position position="98"/>
    </location>
</feature>
<organism>
    <name type="scientific">Arabidopsis thaliana</name>
    <name type="common">Mouse-ear cress</name>
    <dbReference type="NCBI Taxonomy" id="3702"/>
    <lineage>
        <taxon>Eukaryota</taxon>
        <taxon>Viridiplantae</taxon>
        <taxon>Streptophyta</taxon>
        <taxon>Embryophyta</taxon>
        <taxon>Tracheophyta</taxon>
        <taxon>Spermatophyta</taxon>
        <taxon>Magnoliopsida</taxon>
        <taxon>eudicotyledons</taxon>
        <taxon>Gunneridae</taxon>
        <taxon>Pentapetalae</taxon>
        <taxon>rosids</taxon>
        <taxon>malvids</taxon>
        <taxon>Brassicales</taxon>
        <taxon>Brassicaceae</taxon>
        <taxon>Camelineae</taxon>
        <taxon>Arabidopsis</taxon>
    </lineage>
</organism>
<dbReference type="EC" id="2.3.2.27" evidence="7"/>
<dbReference type="EMBL" id="AC007123">
    <property type="status" value="NOT_ANNOTATED_CDS"/>
    <property type="molecule type" value="Genomic_DNA"/>
</dbReference>
<dbReference type="EMBL" id="CP002688">
    <property type="protein sequence ID" value="AED93685.1"/>
    <property type="molecule type" value="Genomic_DNA"/>
</dbReference>
<dbReference type="EMBL" id="AK226995">
    <property type="protein sequence ID" value="BAE99061.1"/>
    <property type="molecule type" value="mRNA"/>
</dbReference>
<dbReference type="EMBL" id="AY084377">
    <property type="protein sequence ID" value="AAM60957.1"/>
    <property type="molecule type" value="mRNA"/>
</dbReference>
<dbReference type="RefSeq" id="NP_198094.1">
    <property type="nucleotide sequence ID" value="NM_122624.4"/>
</dbReference>
<dbReference type="SMR" id="Q8LGA5"/>
<dbReference type="BioGRID" id="18075">
    <property type="interactions" value="6"/>
</dbReference>
<dbReference type="FunCoup" id="Q8LGA5">
    <property type="interactions" value="16"/>
</dbReference>
<dbReference type="STRING" id="3702.Q8LGA5"/>
<dbReference type="iPTMnet" id="Q8LGA5"/>
<dbReference type="PaxDb" id="3702-AT5G27420.1"/>
<dbReference type="ProteomicsDB" id="246632"/>
<dbReference type="EnsemblPlants" id="AT5G27420.1">
    <property type="protein sequence ID" value="AT5G27420.1"/>
    <property type="gene ID" value="AT5G27420"/>
</dbReference>
<dbReference type="GeneID" id="832801"/>
<dbReference type="Gramene" id="AT5G27420.1">
    <property type="protein sequence ID" value="AT5G27420.1"/>
    <property type="gene ID" value="AT5G27420"/>
</dbReference>
<dbReference type="KEGG" id="ath:AT5G27420"/>
<dbReference type="Araport" id="AT5G27420"/>
<dbReference type="TAIR" id="AT5G27420">
    <property type="gene designation" value="CNI1"/>
</dbReference>
<dbReference type="eggNOG" id="KOG0800">
    <property type="taxonomic scope" value="Eukaryota"/>
</dbReference>
<dbReference type="HOGENOM" id="CLU_035191_1_0_1"/>
<dbReference type="InParanoid" id="Q8LGA5"/>
<dbReference type="OMA" id="SFLWRNT"/>
<dbReference type="PhylomeDB" id="Q8LGA5"/>
<dbReference type="UniPathway" id="UPA00143"/>
<dbReference type="PRO" id="PR:Q8LGA5"/>
<dbReference type="Proteomes" id="UP000006548">
    <property type="component" value="Chromosome 5"/>
</dbReference>
<dbReference type="ExpressionAtlas" id="Q8LGA5">
    <property type="expression patterns" value="baseline and differential"/>
</dbReference>
<dbReference type="GO" id="GO:0016020">
    <property type="term" value="C:membrane"/>
    <property type="evidence" value="ECO:0000314"/>
    <property type="project" value="TAIR"/>
</dbReference>
<dbReference type="GO" id="GO:0004842">
    <property type="term" value="F:ubiquitin-protein transferase activity"/>
    <property type="evidence" value="ECO:0000314"/>
    <property type="project" value="TAIR"/>
</dbReference>
<dbReference type="GO" id="GO:0008270">
    <property type="term" value="F:zinc ion binding"/>
    <property type="evidence" value="ECO:0007669"/>
    <property type="project" value="UniProtKB-KW"/>
</dbReference>
<dbReference type="GO" id="GO:0071456">
    <property type="term" value="P:cellular response to hypoxia"/>
    <property type="evidence" value="ECO:0007007"/>
    <property type="project" value="TAIR"/>
</dbReference>
<dbReference type="GO" id="GO:0043562">
    <property type="term" value="P:cellular response to nitrogen levels"/>
    <property type="evidence" value="ECO:0000315"/>
    <property type="project" value="TAIR"/>
</dbReference>
<dbReference type="GO" id="GO:0042742">
    <property type="term" value="P:defense response to bacterium"/>
    <property type="evidence" value="ECO:0000315"/>
    <property type="project" value="TAIR"/>
</dbReference>
<dbReference type="GO" id="GO:0098542">
    <property type="term" value="P:defense response to other organism"/>
    <property type="evidence" value="ECO:0000270"/>
    <property type="project" value="TAIR"/>
</dbReference>
<dbReference type="GO" id="GO:0016567">
    <property type="term" value="P:protein ubiquitination"/>
    <property type="evidence" value="ECO:0007669"/>
    <property type="project" value="UniProtKB-UniPathway"/>
</dbReference>
<dbReference type="GO" id="GO:0009737">
    <property type="term" value="P:response to abscisic acid"/>
    <property type="evidence" value="ECO:0000270"/>
    <property type="project" value="UniProtKB"/>
</dbReference>
<dbReference type="CDD" id="cd16461">
    <property type="entry name" value="RING-H2_EL5-like"/>
    <property type="match status" value="1"/>
</dbReference>
<dbReference type="FunFam" id="3.30.40.10:FF:000187">
    <property type="entry name" value="E3 ubiquitin-protein ligase ATL6"/>
    <property type="match status" value="1"/>
</dbReference>
<dbReference type="Gene3D" id="3.30.40.10">
    <property type="entry name" value="Zinc/RING finger domain, C3HC4 (zinc finger)"/>
    <property type="match status" value="1"/>
</dbReference>
<dbReference type="InterPro" id="IPR053238">
    <property type="entry name" value="RING-H2_zinc_finger"/>
</dbReference>
<dbReference type="InterPro" id="IPR001841">
    <property type="entry name" value="Znf_RING"/>
</dbReference>
<dbReference type="InterPro" id="IPR013083">
    <property type="entry name" value="Znf_RING/FYVE/PHD"/>
</dbReference>
<dbReference type="PANTHER" id="PTHR14155:SF578">
    <property type="entry name" value="E3 UBIQUITIN-PROTEIN LIGASE ATL31"/>
    <property type="match status" value="1"/>
</dbReference>
<dbReference type="PANTHER" id="PTHR14155">
    <property type="entry name" value="RING FINGER DOMAIN-CONTAINING"/>
    <property type="match status" value="1"/>
</dbReference>
<dbReference type="Pfam" id="PF13639">
    <property type="entry name" value="zf-RING_2"/>
    <property type="match status" value="1"/>
</dbReference>
<dbReference type="SMART" id="SM00184">
    <property type="entry name" value="RING"/>
    <property type="match status" value="1"/>
</dbReference>
<dbReference type="SUPFAM" id="SSF57850">
    <property type="entry name" value="RING/U-box"/>
    <property type="match status" value="1"/>
</dbReference>
<dbReference type="PROSITE" id="PS50089">
    <property type="entry name" value="ZF_RING_2"/>
    <property type="match status" value="1"/>
</dbReference>
<reference key="1">
    <citation type="journal article" date="2000" name="Nature">
        <title>Sequence and analysis of chromosome 5 of the plant Arabidopsis thaliana.</title>
        <authorList>
            <person name="Tabata S."/>
            <person name="Kaneko T."/>
            <person name="Nakamura Y."/>
            <person name="Kotani H."/>
            <person name="Kato T."/>
            <person name="Asamizu E."/>
            <person name="Miyajima N."/>
            <person name="Sasamoto S."/>
            <person name="Kimura T."/>
            <person name="Hosouchi T."/>
            <person name="Kawashima K."/>
            <person name="Kohara M."/>
            <person name="Matsumoto M."/>
            <person name="Matsuno A."/>
            <person name="Muraki A."/>
            <person name="Nakayama S."/>
            <person name="Nakazaki N."/>
            <person name="Naruo K."/>
            <person name="Okumura S."/>
            <person name="Shinpo S."/>
            <person name="Takeuchi C."/>
            <person name="Wada T."/>
            <person name="Watanabe A."/>
            <person name="Yamada M."/>
            <person name="Yasuda M."/>
            <person name="Sato S."/>
            <person name="de la Bastide M."/>
            <person name="Huang E."/>
            <person name="Spiegel L."/>
            <person name="Gnoj L."/>
            <person name="O'Shaughnessy A."/>
            <person name="Preston R."/>
            <person name="Habermann K."/>
            <person name="Murray J."/>
            <person name="Johnson D."/>
            <person name="Rohlfing T."/>
            <person name="Nelson J."/>
            <person name="Stoneking T."/>
            <person name="Pepin K."/>
            <person name="Spieth J."/>
            <person name="Sekhon M."/>
            <person name="Armstrong J."/>
            <person name="Becker M."/>
            <person name="Belter E."/>
            <person name="Cordum H."/>
            <person name="Cordes M."/>
            <person name="Courtney L."/>
            <person name="Courtney W."/>
            <person name="Dante M."/>
            <person name="Du H."/>
            <person name="Edwards J."/>
            <person name="Fryman J."/>
            <person name="Haakensen B."/>
            <person name="Lamar E."/>
            <person name="Latreille P."/>
            <person name="Leonard S."/>
            <person name="Meyer R."/>
            <person name="Mulvaney E."/>
            <person name="Ozersky P."/>
            <person name="Riley A."/>
            <person name="Strowmatt C."/>
            <person name="Wagner-McPherson C."/>
            <person name="Wollam A."/>
            <person name="Yoakum M."/>
            <person name="Bell M."/>
            <person name="Dedhia N."/>
            <person name="Parnell L."/>
            <person name="Shah R."/>
            <person name="Rodriguez M."/>
            <person name="Hoon See L."/>
            <person name="Vil D."/>
            <person name="Baker J."/>
            <person name="Kirchoff K."/>
            <person name="Toth K."/>
            <person name="King L."/>
            <person name="Bahret A."/>
            <person name="Miller B."/>
            <person name="Marra M.A."/>
            <person name="Martienssen R."/>
            <person name="McCombie W.R."/>
            <person name="Wilson R.K."/>
            <person name="Murphy G."/>
            <person name="Bancroft I."/>
            <person name="Volckaert G."/>
            <person name="Wambutt R."/>
            <person name="Duesterhoeft A."/>
            <person name="Stiekema W."/>
            <person name="Pohl T."/>
            <person name="Entian K.-D."/>
            <person name="Terryn N."/>
            <person name="Hartley N."/>
            <person name="Bent E."/>
            <person name="Johnson S."/>
            <person name="Langham S.-A."/>
            <person name="McCullagh B."/>
            <person name="Robben J."/>
            <person name="Grymonprez B."/>
            <person name="Zimmermann W."/>
            <person name="Ramsperger U."/>
            <person name="Wedler H."/>
            <person name="Balke K."/>
            <person name="Wedler E."/>
            <person name="Peters S."/>
            <person name="van Staveren M."/>
            <person name="Dirkse W."/>
            <person name="Mooijman P."/>
            <person name="Klein Lankhorst R."/>
            <person name="Weitzenegger T."/>
            <person name="Bothe G."/>
            <person name="Rose M."/>
            <person name="Hauf J."/>
            <person name="Berneiser S."/>
            <person name="Hempel S."/>
            <person name="Feldpausch M."/>
            <person name="Lamberth S."/>
            <person name="Villarroel R."/>
            <person name="Gielen J."/>
            <person name="Ardiles W."/>
            <person name="Bents O."/>
            <person name="Lemcke K."/>
            <person name="Kolesov G."/>
            <person name="Mayer K.F.X."/>
            <person name="Rudd S."/>
            <person name="Schoof H."/>
            <person name="Schueller C."/>
            <person name="Zaccaria P."/>
            <person name="Mewes H.-W."/>
            <person name="Bevan M."/>
            <person name="Fransz P.F."/>
        </authorList>
    </citation>
    <scope>NUCLEOTIDE SEQUENCE [LARGE SCALE GENOMIC DNA]</scope>
    <source>
        <strain>cv. Columbia</strain>
    </source>
</reference>
<reference key="2">
    <citation type="journal article" date="2017" name="Plant J.">
        <title>Araport11: a complete reannotation of the Arabidopsis thaliana reference genome.</title>
        <authorList>
            <person name="Cheng C.Y."/>
            <person name="Krishnakumar V."/>
            <person name="Chan A.P."/>
            <person name="Thibaud-Nissen F."/>
            <person name="Schobel S."/>
            <person name="Town C.D."/>
        </authorList>
    </citation>
    <scope>GENOME REANNOTATION</scope>
    <source>
        <strain>cv. Columbia</strain>
    </source>
</reference>
<reference key="3">
    <citation type="submission" date="2006-07" db="EMBL/GenBank/DDBJ databases">
        <title>Large-scale analysis of RIKEN Arabidopsis full-length (RAFL) cDNAs.</title>
        <authorList>
            <person name="Totoki Y."/>
            <person name="Seki M."/>
            <person name="Ishida J."/>
            <person name="Nakajima M."/>
            <person name="Enju A."/>
            <person name="Kamiya A."/>
            <person name="Narusaka M."/>
            <person name="Shin-i T."/>
            <person name="Nakagawa M."/>
            <person name="Sakamoto N."/>
            <person name="Oishi K."/>
            <person name="Kohara Y."/>
            <person name="Kobayashi M."/>
            <person name="Toyoda A."/>
            <person name="Sakaki Y."/>
            <person name="Sakurai T."/>
            <person name="Iida K."/>
            <person name="Akiyama K."/>
            <person name="Satou M."/>
            <person name="Toyoda T."/>
            <person name="Konagaya A."/>
            <person name="Carninci P."/>
            <person name="Kawai J."/>
            <person name="Hayashizaki Y."/>
            <person name="Shinozaki K."/>
        </authorList>
    </citation>
    <scope>NUCLEOTIDE SEQUENCE [LARGE SCALE MRNA]</scope>
    <source>
        <strain>cv. Columbia</strain>
    </source>
</reference>
<reference key="4">
    <citation type="submission" date="2002-03" db="EMBL/GenBank/DDBJ databases">
        <title>Full-length cDNA from Arabidopsis thaliana.</title>
        <authorList>
            <person name="Brover V.V."/>
            <person name="Troukhan M.E."/>
            <person name="Alexandrov N.A."/>
            <person name="Lu Y.-P."/>
            <person name="Flavell R.B."/>
            <person name="Feldmann K.A."/>
        </authorList>
    </citation>
    <scope>NUCLEOTIDE SEQUENCE [LARGE SCALE MRNA]</scope>
</reference>
<reference key="5">
    <citation type="journal article" date="2002" name="Genome Biol.">
        <title>Evaluation and classification of RING-finger domains encoded by the Arabidopsis genome.</title>
        <authorList>
            <person name="Kosarev P."/>
            <person name="Mayer K.F.X."/>
            <person name="Hardtke C.S."/>
        </authorList>
    </citation>
    <scope>GENE FAMILY ORGANIZATION</scope>
</reference>
<reference key="6">
    <citation type="journal article" date="2006" name="J. Mol. Evol.">
        <title>The ATL gene family from Arabidopsis thaliana and Oryza sativa comprises a large number of putative ubiquitin ligases of the RING-H2 type.</title>
        <authorList>
            <person name="Serrano M."/>
            <person name="Parra S."/>
            <person name="Alcaraz L.D."/>
            <person name="Guzman P."/>
        </authorList>
    </citation>
    <scope>NOMENCLATURE</scope>
    <scope>GENE FAMILY ORGANIZATION</scope>
</reference>
<reference key="7">
    <citation type="journal article" date="2007" name="Mol. Plant Microbe Interact.">
        <title>Identification of 118 Arabidopsis transcription factor and 30 ubiquitin-ligase genes responding to chitin, a plant-defense elicitor.</title>
        <authorList>
            <person name="Libault M."/>
            <person name="Wan J."/>
            <person name="Czechowski T."/>
            <person name="Udvardi M."/>
            <person name="Stacey G."/>
        </authorList>
    </citation>
    <scope>INDUCTION BY CHITIN</scope>
</reference>
<reference key="8">
    <citation type="book" date="2009" name="Proceedings of the 20th international conference on Arabidopsis research">
        <title>Isolation of a novel RING-type ubiquitin ligase SSV1 that regulates carbon/nitrogen response at early post-germinative growth stage in Arabidopsis thaliana.</title>
        <authorList>
            <person name="Sato T."/>
            <person name="Maekawa S."/>
            <person name="Sonoda Y."/>
            <person name="Yamaguchi J."/>
        </authorList>
    </citation>
    <scope>FUNCTION</scope>
</reference>
<reference key="9">
    <citation type="journal article" date="2009" name="Plant J.">
        <title>CNI1/ATL31, a RING-type ubiquitin ligase that functions in the carbon/nitrogen response for growth phase transition in Arabidopsis seedlings.</title>
        <authorList>
            <person name="Sato T."/>
            <person name="Maekawa S."/>
            <person name="Yasuda S."/>
            <person name="Sonoda Y."/>
            <person name="Katoh E."/>
            <person name="Ichikawa T."/>
            <person name="Nakazawa M."/>
            <person name="Seki M."/>
            <person name="Shinozaki K."/>
            <person name="Matsui M."/>
            <person name="Goto D.B."/>
            <person name="Ikeda A."/>
            <person name="Yamaguchi J."/>
        </authorList>
    </citation>
    <scope>FUNCTION</scope>
    <scope>DISRUPTION PHENOTYPE</scope>
    <scope>INDUCTION</scope>
    <scope>SUBCELLULAR LOCATION</scope>
    <scope>CATALYTIC ACTIVITY</scope>
</reference>
<name>ATL31_ARATH</name>
<accession>Q8LGA5</accession>
<accession>Q0WUY7</accession>